<proteinExistence type="inferred from homology"/>
<comment type="function">
    <text evidence="1">Tetrapolymerization of the monopyrrole PBG into the hydroxymethylbilane pre-uroporphyrinogen in several discrete steps.</text>
</comment>
<comment type="catalytic activity">
    <reaction evidence="1">
        <text>4 porphobilinogen + H2O = hydroxymethylbilane + 4 NH4(+)</text>
        <dbReference type="Rhea" id="RHEA:13185"/>
        <dbReference type="ChEBI" id="CHEBI:15377"/>
        <dbReference type="ChEBI" id="CHEBI:28938"/>
        <dbReference type="ChEBI" id="CHEBI:57845"/>
        <dbReference type="ChEBI" id="CHEBI:58126"/>
        <dbReference type="EC" id="2.5.1.61"/>
    </reaction>
</comment>
<comment type="cofactor">
    <cofactor evidence="1">
        <name>dipyrromethane</name>
        <dbReference type="ChEBI" id="CHEBI:60342"/>
    </cofactor>
    <text evidence="1">Binds 1 dipyrromethane group covalently.</text>
</comment>
<comment type="pathway">
    <text evidence="1">Porphyrin-containing compound metabolism; protoporphyrin-IX biosynthesis; coproporphyrinogen-III from 5-aminolevulinate: step 2/4.</text>
</comment>
<comment type="subunit">
    <text evidence="1">Monomer.</text>
</comment>
<comment type="miscellaneous">
    <text evidence="1">The porphobilinogen subunits are added to the dipyrromethane group.</text>
</comment>
<comment type="similarity">
    <text evidence="1">Belongs to the HMBS family.</text>
</comment>
<accession>Q8DD85</accession>
<gene>
    <name evidence="1" type="primary">hemC</name>
    <name type="ordered locus">VV1_1122</name>
</gene>
<keyword id="KW-0627">Porphyrin biosynthesis</keyword>
<keyword id="KW-0808">Transferase</keyword>
<name>HEM3_VIBVU</name>
<reference key="1">
    <citation type="submission" date="2002-12" db="EMBL/GenBank/DDBJ databases">
        <title>Complete genome sequence of Vibrio vulnificus CMCP6.</title>
        <authorList>
            <person name="Rhee J.H."/>
            <person name="Kim S.Y."/>
            <person name="Chung S.S."/>
            <person name="Kim J.J."/>
            <person name="Moon Y.H."/>
            <person name="Jeong H."/>
            <person name="Choy H.E."/>
        </authorList>
    </citation>
    <scope>NUCLEOTIDE SEQUENCE [LARGE SCALE GENOMIC DNA]</scope>
    <source>
        <strain>CMCP6</strain>
    </source>
</reference>
<sequence>MTHSTPIRIATRKSPLALWQAYYVKDALQKAHPGLEVELVTMVTKGDVILDTPLAKVGGKGLFVKELEVAMLEGRADLAVHSMKDVPVDFPEGLGLVTICEREDPRDAFVSNTYHHVDELPQGAVVGTCSLRRQCQLKAYRPDLVIKELRGNVGTRLSKLDAGEYDAIILAAAGLKRLELEERIRSFIEPEQSLPAVGQGAVGIECRTNDERILKLLEPLNHADTADRVKCERAMNLTLEGGCQVPIGSYALLEGDEIWLRALVGEPDGSEIVRGEIRGPRAQAEQLGVQLANQLLDEGAREILTKLYQDHE</sequence>
<evidence type="ECO:0000255" key="1">
    <source>
        <dbReference type="HAMAP-Rule" id="MF_00260"/>
    </source>
</evidence>
<feature type="chain" id="PRO_0000143007" description="Porphobilinogen deaminase">
    <location>
        <begin position="1"/>
        <end position="312"/>
    </location>
</feature>
<feature type="modified residue" description="S-(dipyrrolylmethanemethyl)cysteine" evidence="1">
    <location>
        <position position="243"/>
    </location>
</feature>
<organism>
    <name type="scientific">Vibrio vulnificus (strain CMCP6)</name>
    <dbReference type="NCBI Taxonomy" id="216895"/>
    <lineage>
        <taxon>Bacteria</taxon>
        <taxon>Pseudomonadati</taxon>
        <taxon>Pseudomonadota</taxon>
        <taxon>Gammaproteobacteria</taxon>
        <taxon>Vibrionales</taxon>
        <taxon>Vibrionaceae</taxon>
        <taxon>Vibrio</taxon>
    </lineage>
</organism>
<dbReference type="EC" id="2.5.1.61" evidence="1"/>
<dbReference type="EMBL" id="AE016795">
    <property type="protein sequence ID" value="AAO09598.1"/>
    <property type="molecule type" value="Genomic_DNA"/>
</dbReference>
<dbReference type="RefSeq" id="WP_011079138.1">
    <property type="nucleotide sequence ID" value="NC_004459.3"/>
</dbReference>
<dbReference type="SMR" id="Q8DD85"/>
<dbReference type="KEGG" id="vvu:VV1_1122"/>
<dbReference type="HOGENOM" id="CLU_019704_0_2_6"/>
<dbReference type="UniPathway" id="UPA00251">
    <property type="reaction ID" value="UER00319"/>
</dbReference>
<dbReference type="Proteomes" id="UP000002275">
    <property type="component" value="Chromosome 1"/>
</dbReference>
<dbReference type="GO" id="GO:0005737">
    <property type="term" value="C:cytoplasm"/>
    <property type="evidence" value="ECO:0007669"/>
    <property type="project" value="TreeGrafter"/>
</dbReference>
<dbReference type="GO" id="GO:0004418">
    <property type="term" value="F:hydroxymethylbilane synthase activity"/>
    <property type="evidence" value="ECO:0007669"/>
    <property type="project" value="UniProtKB-UniRule"/>
</dbReference>
<dbReference type="GO" id="GO:0006782">
    <property type="term" value="P:protoporphyrinogen IX biosynthetic process"/>
    <property type="evidence" value="ECO:0007669"/>
    <property type="project" value="UniProtKB-UniRule"/>
</dbReference>
<dbReference type="CDD" id="cd13646">
    <property type="entry name" value="PBP2_EcHMBS_like"/>
    <property type="match status" value="1"/>
</dbReference>
<dbReference type="FunFam" id="3.30.160.40:FF:000002">
    <property type="entry name" value="Porphobilinogen deaminase"/>
    <property type="match status" value="1"/>
</dbReference>
<dbReference type="FunFam" id="3.40.190.10:FF:000004">
    <property type="entry name" value="Porphobilinogen deaminase"/>
    <property type="match status" value="1"/>
</dbReference>
<dbReference type="FunFam" id="3.40.190.10:FF:000005">
    <property type="entry name" value="Porphobilinogen deaminase"/>
    <property type="match status" value="1"/>
</dbReference>
<dbReference type="Gene3D" id="3.40.190.10">
    <property type="entry name" value="Periplasmic binding protein-like II"/>
    <property type="match status" value="2"/>
</dbReference>
<dbReference type="Gene3D" id="3.30.160.40">
    <property type="entry name" value="Porphobilinogen deaminase, C-terminal domain"/>
    <property type="match status" value="1"/>
</dbReference>
<dbReference type="HAMAP" id="MF_00260">
    <property type="entry name" value="Porphobil_deam"/>
    <property type="match status" value="1"/>
</dbReference>
<dbReference type="InterPro" id="IPR000860">
    <property type="entry name" value="HemC"/>
</dbReference>
<dbReference type="InterPro" id="IPR022419">
    <property type="entry name" value="Porphobilin_deaminase_cofac_BS"/>
</dbReference>
<dbReference type="InterPro" id="IPR022417">
    <property type="entry name" value="Porphobilin_deaminase_N"/>
</dbReference>
<dbReference type="InterPro" id="IPR022418">
    <property type="entry name" value="Porphobilinogen_deaminase_C"/>
</dbReference>
<dbReference type="InterPro" id="IPR036803">
    <property type="entry name" value="Porphobilinogen_deaminase_C_sf"/>
</dbReference>
<dbReference type="NCBIfam" id="TIGR00212">
    <property type="entry name" value="hemC"/>
    <property type="match status" value="1"/>
</dbReference>
<dbReference type="PANTHER" id="PTHR11557">
    <property type="entry name" value="PORPHOBILINOGEN DEAMINASE"/>
    <property type="match status" value="1"/>
</dbReference>
<dbReference type="PANTHER" id="PTHR11557:SF0">
    <property type="entry name" value="PORPHOBILINOGEN DEAMINASE"/>
    <property type="match status" value="1"/>
</dbReference>
<dbReference type="Pfam" id="PF01379">
    <property type="entry name" value="Porphobil_deam"/>
    <property type="match status" value="1"/>
</dbReference>
<dbReference type="Pfam" id="PF03900">
    <property type="entry name" value="Porphobil_deamC"/>
    <property type="match status" value="1"/>
</dbReference>
<dbReference type="PIRSF" id="PIRSF001438">
    <property type="entry name" value="4pyrrol_synth_OHMeBilane_synth"/>
    <property type="match status" value="1"/>
</dbReference>
<dbReference type="PRINTS" id="PR00151">
    <property type="entry name" value="PORPHBDMNASE"/>
</dbReference>
<dbReference type="SUPFAM" id="SSF53850">
    <property type="entry name" value="Periplasmic binding protein-like II"/>
    <property type="match status" value="1"/>
</dbReference>
<dbReference type="SUPFAM" id="SSF54782">
    <property type="entry name" value="Porphobilinogen deaminase (hydroxymethylbilane synthase), C-terminal domain"/>
    <property type="match status" value="1"/>
</dbReference>
<dbReference type="PROSITE" id="PS00533">
    <property type="entry name" value="PORPHOBILINOGEN_DEAM"/>
    <property type="match status" value="1"/>
</dbReference>
<protein>
    <recommendedName>
        <fullName evidence="1">Porphobilinogen deaminase</fullName>
        <shortName evidence="1">PBG</shortName>
        <ecNumber evidence="1">2.5.1.61</ecNumber>
    </recommendedName>
    <alternativeName>
        <fullName evidence="1">Hydroxymethylbilane synthase</fullName>
        <shortName evidence="1">HMBS</shortName>
    </alternativeName>
    <alternativeName>
        <fullName evidence="1">Pre-uroporphyrinogen synthase</fullName>
    </alternativeName>
</protein>